<feature type="chain" id="PRO_1000009671" description="dCTP deaminase">
    <location>
        <begin position="1"/>
        <end position="188"/>
    </location>
</feature>
<feature type="active site" description="Proton donor/acceptor" evidence="1">
    <location>
        <position position="137"/>
    </location>
</feature>
<feature type="binding site" evidence="1">
    <location>
        <begin position="111"/>
        <end position="116"/>
    </location>
    <ligand>
        <name>dCTP</name>
        <dbReference type="ChEBI" id="CHEBI:61481"/>
    </ligand>
</feature>
<feature type="binding site" evidence="1">
    <location>
        <begin position="135"/>
        <end position="137"/>
    </location>
    <ligand>
        <name>dCTP</name>
        <dbReference type="ChEBI" id="CHEBI:61481"/>
    </ligand>
</feature>
<feature type="binding site" evidence="1">
    <location>
        <position position="156"/>
    </location>
    <ligand>
        <name>dCTP</name>
        <dbReference type="ChEBI" id="CHEBI:61481"/>
    </ligand>
</feature>
<feature type="binding site" evidence="1">
    <location>
        <position position="170"/>
    </location>
    <ligand>
        <name>dCTP</name>
        <dbReference type="ChEBI" id="CHEBI:61481"/>
    </ligand>
</feature>
<feature type="binding site" evidence="1">
    <location>
        <position position="180"/>
    </location>
    <ligand>
        <name>dCTP</name>
        <dbReference type="ChEBI" id="CHEBI:61481"/>
    </ligand>
</feature>
<name>DCD_ACISJ</name>
<keyword id="KW-0378">Hydrolase</keyword>
<keyword id="KW-0546">Nucleotide metabolism</keyword>
<keyword id="KW-0547">Nucleotide-binding</keyword>
<protein>
    <recommendedName>
        <fullName evidence="1">dCTP deaminase</fullName>
        <ecNumber evidence="1">3.5.4.13</ecNumber>
    </recommendedName>
    <alternativeName>
        <fullName evidence="1">Deoxycytidine triphosphate deaminase</fullName>
    </alternativeName>
</protein>
<sequence>MSIKSDKWIRRMAEQHGMIEPFEPGQIRQQDGRKIISYGTSSYGYDIRCAREFKVFTNIHSTVVDPKNFDEKSFVDFEGDYCIIPPNSFALARTVEYFRIPRDVLTVCLGKSTYARCGIIVNVTPFEPEWEGYVTLEFSNTTPLPAKIYAGEGCAQVLFFQGDEECAVSYKDRNGKYQGQHGVTLPKA</sequence>
<evidence type="ECO:0000255" key="1">
    <source>
        <dbReference type="HAMAP-Rule" id="MF_00146"/>
    </source>
</evidence>
<proteinExistence type="inferred from homology"/>
<dbReference type="EC" id="3.5.4.13" evidence="1"/>
<dbReference type="EMBL" id="CP000539">
    <property type="protein sequence ID" value="ABM41363.1"/>
    <property type="molecule type" value="Genomic_DNA"/>
</dbReference>
<dbReference type="SMR" id="A1W538"/>
<dbReference type="STRING" id="232721.Ajs_1130"/>
<dbReference type="KEGG" id="ajs:Ajs_1130"/>
<dbReference type="eggNOG" id="COG0717">
    <property type="taxonomic scope" value="Bacteria"/>
</dbReference>
<dbReference type="HOGENOM" id="CLU_087476_4_0_4"/>
<dbReference type="UniPathway" id="UPA00610">
    <property type="reaction ID" value="UER00665"/>
</dbReference>
<dbReference type="Proteomes" id="UP000000645">
    <property type="component" value="Chromosome"/>
</dbReference>
<dbReference type="GO" id="GO:0008829">
    <property type="term" value="F:dCTP deaminase activity"/>
    <property type="evidence" value="ECO:0007669"/>
    <property type="project" value="UniProtKB-UniRule"/>
</dbReference>
<dbReference type="GO" id="GO:0000166">
    <property type="term" value="F:nucleotide binding"/>
    <property type="evidence" value="ECO:0007669"/>
    <property type="project" value="UniProtKB-KW"/>
</dbReference>
<dbReference type="GO" id="GO:0006226">
    <property type="term" value="P:dUMP biosynthetic process"/>
    <property type="evidence" value="ECO:0007669"/>
    <property type="project" value="UniProtKB-UniPathway"/>
</dbReference>
<dbReference type="GO" id="GO:0006229">
    <property type="term" value="P:dUTP biosynthetic process"/>
    <property type="evidence" value="ECO:0007669"/>
    <property type="project" value="UniProtKB-UniRule"/>
</dbReference>
<dbReference type="GO" id="GO:0015949">
    <property type="term" value="P:nucleobase-containing small molecule interconversion"/>
    <property type="evidence" value="ECO:0007669"/>
    <property type="project" value="TreeGrafter"/>
</dbReference>
<dbReference type="CDD" id="cd07557">
    <property type="entry name" value="trimeric_dUTPase"/>
    <property type="match status" value="1"/>
</dbReference>
<dbReference type="FunFam" id="2.70.40.10:FF:000001">
    <property type="entry name" value="dCTP deaminase"/>
    <property type="match status" value="1"/>
</dbReference>
<dbReference type="Gene3D" id="2.70.40.10">
    <property type="match status" value="1"/>
</dbReference>
<dbReference type="HAMAP" id="MF_00146">
    <property type="entry name" value="dCTP_deaminase"/>
    <property type="match status" value="1"/>
</dbReference>
<dbReference type="InterPro" id="IPR011962">
    <property type="entry name" value="dCTP_deaminase"/>
</dbReference>
<dbReference type="InterPro" id="IPR036157">
    <property type="entry name" value="dUTPase-like_sf"/>
</dbReference>
<dbReference type="InterPro" id="IPR033704">
    <property type="entry name" value="dUTPase_trimeric"/>
</dbReference>
<dbReference type="NCBIfam" id="TIGR02274">
    <property type="entry name" value="dCTP_deam"/>
    <property type="match status" value="1"/>
</dbReference>
<dbReference type="PANTHER" id="PTHR42680">
    <property type="entry name" value="DCTP DEAMINASE"/>
    <property type="match status" value="1"/>
</dbReference>
<dbReference type="PANTHER" id="PTHR42680:SF3">
    <property type="entry name" value="DCTP DEAMINASE"/>
    <property type="match status" value="1"/>
</dbReference>
<dbReference type="Pfam" id="PF22769">
    <property type="entry name" value="DCD"/>
    <property type="match status" value="1"/>
</dbReference>
<dbReference type="SUPFAM" id="SSF51283">
    <property type="entry name" value="dUTPase-like"/>
    <property type="match status" value="1"/>
</dbReference>
<comment type="function">
    <text evidence="1">Catalyzes the deamination of dCTP to dUTP.</text>
</comment>
<comment type="catalytic activity">
    <reaction evidence="1">
        <text>dCTP + H2O + H(+) = dUTP + NH4(+)</text>
        <dbReference type="Rhea" id="RHEA:22680"/>
        <dbReference type="ChEBI" id="CHEBI:15377"/>
        <dbReference type="ChEBI" id="CHEBI:15378"/>
        <dbReference type="ChEBI" id="CHEBI:28938"/>
        <dbReference type="ChEBI" id="CHEBI:61481"/>
        <dbReference type="ChEBI" id="CHEBI:61555"/>
        <dbReference type="EC" id="3.5.4.13"/>
    </reaction>
</comment>
<comment type="pathway">
    <text evidence="1">Pyrimidine metabolism; dUMP biosynthesis; dUMP from dCTP (dUTP route): step 1/2.</text>
</comment>
<comment type="subunit">
    <text evidence="1">Homotrimer.</text>
</comment>
<comment type="similarity">
    <text evidence="1">Belongs to the dCTP deaminase family.</text>
</comment>
<gene>
    <name evidence="1" type="primary">dcd</name>
    <name type="ordered locus">Ajs_1130</name>
</gene>
<organism>
    <name type="scientific">Acidovorax sp. (strain JS42)</name>
    <dbReference type="NCBI Taxonomy" id="232721"/>
    <lineage>
        <taxon>Bacteria</taxon>
        <taxon>Pseudomonadati</taxon>
        <taxon>Pseudomonadota</taxon>
        <taxon>Betaproteobacteria</taxon>
        <taxon>Burkholderiales</taxon>
        <taxon>Comamonadaceae</taxon>
        <taxon>Acidovorax</taxon>
    </lineage>
</organism>
<reference key="1">
    <citation type="submission" date="2006-12" db="EMBL/GenBank/DDBJ databases">
        <title>Complete sequence of chromosome 1 of Acidovorax sp. JS42.</title>
        <authorList>
            <person name="Copeland A."/>
            <person name="Lucas S."/>
            <person name="Lapidus A."/>
            <person name="Barry K."/>
            <person name="Detter J.C."/>
            <person name="Glavina del Rio T."/>
            <person name="Dalin E."/>
            <person name="Tice H."/>
            <person name="Pitluck S."/>
            <person name="Chertkov O."/>
            <person name="Brettin T."/>
            <person name="Bruce D."/>
            <person name="Han C."/>
            <person name="Tapia R."/>
            <person name="Gilna P."/>
            <person name="Schmutz J."/>
            <person name="Larimer F."/>
            <person name="Land M."/>
            <person name="Hauser L."/>
            <person name="Kyrpides N."/>
            <person name="Kim E."/>
            <person name="Stahl D."/>
            <person name="Richardson P."/>
        </authorList>
    </citation>
    <scope>NUCLEOTIDE SEQUENCE [LARGE SCALE GENOMIC DNA]</scope>
    <source>
        <strain>JS42</strain>
    </source>
</reference>
<accession>A1W538</accession>